<protein>
    <recommendedName>
        <fullName>Protein arg-6, mitochondrial</fullName>
    </recommendedName>
    <component>
        <recommendedName>
            <fullName>N-acetyl-gamma-glutamyl-phosphate reductase</fullName>
            <ecNumber>1.2.1.38</ecNumber>
        </recommendedName>
        <alternativeName>
            <fullName>N-acetyl-glutamate semialdehyde dehydrogenase</fullName>
            <shortName>NAGSA dehydrogenase</shortName>
        </alternativeName>
    </component>
    <component>
        <recommendedName>
            <fullName>Acetylglutamate kinase</fullName>
            <ecNumber>2.7.2.8</ecNumber>
        </recommendedName>
        <alternativeName>
            <fullName>N-acetyl-L-glutamate 5-phosphotransferase</fullName>
        </alternativeName>
        <alternativeName>
            <fullName>NAG kinase</fullName>
            <shortName>AGK</shortName>
        </alternativeName>
    </component>
</protein>
<organism>
    <name type="scientific">Neurospora crassa (strain ATCC 24698 / 74-OR23-1A / CBS 708.71 / DSM 1257 / FGSC 987)</name>
    <dbReference type="NCBI Taxonomy" id="367110"/>
    <lineage>
        <taxon>Eukaryota</taxon>
        <taxon>Fungi</taxon>
        <taxon>Dikarya</taxon>
        <taxon>Ascomycota</taxon>
        <taxon>Pezizomycotina</taxon>
        <taxon>Sordariomycetes</taxon>
        <taxon>Sordariomycetidae</taxon>
        <taxon>Sordariales</taxon>
        <taxon>Sordariaceae</taxon>
        <taxon>Neurospora</taxon>
    </lineage>
</organism>
<sequence>MYSACAVALRAGARRVVRRVPKSARALPRAAAARRQISTTAARSTDLTTRGMIVQTLSSVGSKREVQQYLSLFTSVSSQRFAVIKVGGAILTDYLDELCAALKFLYTVGLYPVIVHGAGPQLNRLLEDAGVEPQFEEGIRVTDAKTLRVARDLFLQENLKLVNKLEEMGVHAQPLTTGMFRADYLNKEKWGLVGKVTGVNKQAIETAISNGYLPILTSMAETDDGQILNVNADVAAAELARALEPLKVVYLSEKGGLFDAGGQKISAINLDEEYEHLMSQAWVKYGTRLKIKEIKELLDTLPRTTSVAIIHPEELQKELFTDSGAGTLIRRGSKLQASTSLSEFKDLEALKSVLIRDREGPDAKETVEKYLDFLKENPFKAYFDSSMNALAIVLPASEGRQATLATLTITKSGWLTNIADNIFTALKKEHPSLVWTVKEDDENLGWFFDKADGSITRQGDVMFWYGIENGDEIVKLMKDFTENGRAMLGNSNLESRLRQAASKPAAQQVRGYSTLARRPALPKFSISNRRGYLTQTNPNPPVGKQNASMDRPARVALIGARGYTGQELIRLIDSHPNMELHHVSSRELAGKKLEGYNKQEVIYENLSPEDVRDMEKRGEIDCWVMALPNGVCKPFVEAVWEGRKASGHKSVIIDLSADYRFDNKWTYGLPELVQRSNIIQATQIANPGCYATAAQLGISPLVPHLGGMPHVFGVSGYSGAGTKPSPKNDVENLTNNIIPYSLTGHIHEREVSSQLGAEIAFMPHVAVWFRGIHHTISIPLNKSMTSRDIRQLYQDRYAGEKLVKVVGEAPSVKNIGGKHGVEIGGFEVDKSGRRVVICATIDNLLKGAATQCLQNMNLALGYAEYEGIPTM</sequence>
<dbReference type="EC" id="1.2.1.38"/>
<dbReference type="EC" id="2.7.2.8"/>
<dbReference type="EMBL" id="L27746">
    <property type="protein sequence ID" value="AAB05636.1"/>
    <property type="molecule type" value="Genomic_DNA"/>
</dbReference>
<dbReference type="EMBL" id="CM002236">
    <property type="protein sequence ID" value="ESA44319.1"/>
    <property type="molecule type" value="Genomic_DNA"/>
</dbReference>
<dbReference type="EMBL" id="CM002236">
    <property type="protein sequence ID" value="ESA44320.1"/>
    <property type="molecule type" value="Genomic_DNA"/>
</dbReference>
<dbReference type="PIR" id="A53429">
    <property type="entry name" value="A53429"/>
</dbReference>
<dbReference type="RefSeq" id="XP_011392782.1">
    <property type="nucleotide sequence ID" value="XM_011394480.1"/>
</dbReference>
<dbReference type="RefSeq" id="XP_011392783.1">
    <property type="nucleotide sequence ID" value="XM_011394481.1"/>
</dbReference>
<dbReference type="SMR" id="P54898"/>
<dbReference type="FunCoup" id="P54898">
    <property type="interactions" value="107"/>
</dbReference>
<dbReference type="STRING" id="367110.P54898"/>
<dbReference type="PaxDb" id="5141-EFNCRP00000000910"/>
<dbReference type="EnsemblFungi" id="ESA44319">
    <property type="protein sequence ID" value="ESA44319"/>
    <property type="gene ID" value="NCU00567"/>
</dbReference>
<dbReference type="EnsemblFungi" id="ESA44320">
    <property type="protein sequence ID" value="ESA44320"/>
    <property type="gene ID" value="NCU00567"/>
</dbReference>
<dbReference type="GeneID" id="3880877"/>
<dbReference type="KEGG" id="ncr:NCU00567"/>
<dbReference type="VEuPathDB" id="FungiDB:NCU00567"/>
<dbReference type="HOGENOM" id="CLU_006384_4_0_1"/>
<dbReference type="InParanoid" id="P54898"/>
<dbReference type="OrthoDB" id="438291at2759"/>
<dbReference type="UniPathway" id="UPA00068">
    <property type="reaction ID" value="UER00107"/>
</dbReference>
<dbReference type="UniPathway" id="UPA00068">
    <property type="reaction ID" value="UER00108"/>
</dbReference>
<dbReference type="Proteomes" id="UP000001805">
    <property type="component" value="Chromosome 1, Linkage Group I"/>
</dbReference>
<dbReference type="GO" id="GO:0005759">
    <property type="term" value="C:mitochondrial matrix"/>
    <property type="evidence" value="ECO:0000318"/>
    <property type="project" value="GO_Central"/>
</dbReference>
<dbReference type="GO" id="GO:0003991">
    <property type="term" value="F:acetylglutamate kinase activity"/>
    <property type="evidence" value="ECO:0000318"/>
    <property type="project" value="GO_Central"/>
</dbReference>
<dbReference type="GO" id="GO:0005524">
    <property type="term" value="F:ATP binding"/>
    <property type="evidence" value="ECO:0007669"/>
    <property type="project" value="UniProtKB-KW"/>
</dbReference>
<dbReference type="GO" id="GO:0003942">
    <property type="term" value="F:N-acetyl-gamma-glutamyl-phosphate reductase activity"/>
    <property type="evidence" value="ECO:0000318"/>
    <property type="project" value="GO_Central"/>
</dbReference>
<dbReference type="GO" id="GO:0051287">
    <property type="term" value="F:NAD binding"/>
    <property type="evidence" value="ECO:0007669"/>
    <property type="project" value="InterPro"/>
</dbReference>
<dbReference type="GO" id="GO:0070401">
    <property type="term" value="F:NADP+ binding"/>
    <property type="evidence" value="ECO:0007669"/>
    <property type="project" value="InterPro"/>
</dbReference>
<dbReference type="GO" id="GO:0042450">
    <property type="term" value="P:arginine biosynthetic process via ornithine"/>
    <property type="evidence" value="ECO:0007669"/>
    <property type="project" value="EnsemblFungi"/>
</dbReference>
<dbReference type="GO" id="GO:0006526">
    <property type="term" value="P:L-arginine biosynthetic process"/>
    <property type="evidence" value="ECO:0000318"/>
    <property type="project" value="GO_Central"/>
</dbReference>
<dbReference type="GO" id="GO:0006355">
    <property type="term" value="P:regulation of DNA-templated transcription"/>
    <property type="evidence" value="ECO:0007669"/>
    <property type="project" value="EnsemblFungi"/>
</dbReference>
<dbReference type="CDD" id="cd04252">
    <property type="entry name" value="AAK_NAGK-fArgBP"/>
    <property type="match status" value="1"/>
</dbReference>
<dbReference type="CDD" id="cd23936">
    <property type="entry name" value="AGPR_C_ARG5_6_like"/>
    <property type="match status" value="1"/>
</dbReference>
<dbReference type="CDD" id="cd24149">
    <property type="entry name" value="AGPR_N_ARG5_6_like"/>
    <property type="match status" value="1"/>
</dbReference>
<dbReference type="CDD" id="cd04263">
    <property type="entry name" value="DUF619-NAGK-FABP"/>
    <property type="match status" value="1"/>
</dbReference>
<dbReference type="FunFam" id="3.30.360.10:FF:000019">
    <property type="entry name" value="Bifunctional acetylglutamate kinase/N-acetyl-gamma-glutamyl-phosphate reductase"/>
    <property type="match status" value="1"/>
</dbReference>
<dbReference type="FunFam" id="3.40.630.30:FF:000029">
    <property type="entry name" value="Bifunctional acetylglutamate kinase/N-acetyl-gamma-glutamyl-phosphate reductase"/>
    <property type="match status" value="1"/>
</dbReference>
<dbReference type="FunFam" id="3.40.1160.10:FF:000011">
    <property type="entry name" value="N-acetyl-gamma-glutamyl-phosphate reductase, variant"/>
    <property type="match status" value="1"/>
</dbReference>
<dbReference type="Gene3D" id="3.40.630.30">
    <property type="match status" value="1"/>
</dbReference>
<dbReference type="Gene3D" id="3.40.1160.10">
    <property type="entry name" value="Acetylglutamate kinase-like"/>
    <property type="match status" value="1"/>
</dbReference>
<dbReference type="Gene3D" id="3.30.360.10">
    <property type="entry name" value="Dihydrodipicolinate Reductase, domain 2"/>
    <property type="match status" value="1"/>
</dbReference>
<dbReference type="Gene3D" id="3.40.50.720">
    <property type="entry name" value="NAD(P)-binding Rossmann-like Domain"/>
    <property type="match status" value="1"/>
</dbReference>
<dbReference type="HAMAP" id="MF_00150">
    <property type="entry name" value="ArgC_type1"/>
    <property type="match status" value="1"/>
</dbReference>
<dbReference type="InterPro" id="IPR036393">
    <property type="entry name" value="AceGlu_kinase-like_sf"/>
</dbReference>
<dbReference type="InterPro" id="IPR004662">
    <property type="entry name" value="AcgluKinase_fam"/>
</dbReference>
<dbReference type="InterPro" id="IPR023013">
    <property type="entry name" value="AGPR_AS"/>
</dbReference>
<dbReference type="InterPro" id="IPR000706">
    <property type="entry name" value="AGPR_type-1"/>
</dbReference>
<dbReference type="InterPro" id="IPR001048">
    <property type="entry name" value="Asp/Glu/Uridylate_kinase"/>
</dbReference>
<dbReference type="InterPro" id="IPR036291">
    <property type="entry name" value="NAD(P)-bd_dom_sf"/>
</dbReference>
<dbReference type="InterPro" id="IPR041734">
    <property type="entry name" value="NAGK-fArgBP"/>
</dbReference>
<dbReference type="InterPro" id="IPR011241">
    <property type="entry name" value="NAGK/NAGSA"/>
</dbReference>
<dbReference type="InterPro" id="IPR000534">
    <property type="entry name" value="Semialdehyde_DH_NAD-bd"/>
</dbReference>
<dbReference type="InterPro" id="IPR006855">
    <property type="entry name" value="Vertebrate-like_GNAT_dom"/>
</dbReference>
<dbReference type="NCBIfam" id="TIGR00761">
    <property type="entry name" value="argB"/>
    <property type="match status" value="1"/>
</dbReference>
<dbReference type="NCBIfam" id="TIGR01850">
    <property type="entry name" value="argC"/>
    <property type="match status" value="1"/>
</dbReference>
<dbReference type="PANTHER" id="PTHR23342">
    <property type="entry name" value="N-ACETYLGLUTAMATE SYNTHASE"/>
    <property type="match status" value="1"/>
</dbReference>
<dbReference type="PANTHER" id="PTHR23342:SF0">
    <property type="entry name" value="N-ACETYLGLUTAMATE SYNTHASE, MITOCHONDRIAL"/>
    <property type="match status" value="1"/>
</dbReference>
<dbReference type="Pfam" id="PF00696">
    <property type="entry name" value="AA_kinase"/>
    <property type="match status" value="1"/>
</dbReference>
<dbReference type="Pfam" id="PF04768">
    <property type="entry name" value="NAT"/>
    <property type="match status" value="1"/>
</dbReference>
<dbReference type="Pfam" id="PF01118">
    <property type="entry name" value="Semialdhyde_dh"/>
    <property type="match status" value="1"/>
</dbReference>
<dbReference type="Pfam" id="PF22698">
    <property type="entry name" value="Semialdhyde_dhC_1"/>
    <property type="match status" value="1"/>
</dbReference>
<dbReference type="PIRSF" id="PIRSF036440">
    <property type="entry name" value="ARG5-6"/>
    <property type="match status" value="1"/>
</dbReference>
<dbReference type="SMART" id="SM00859">
    <property type="entry name" value="Semialdhyde_dh"/>
    <property type="match status" value="1"/>
</dbReference>
<dbReference type="SUPFAM" id="SSF53633">
    <property type="entry name" value="Carbamate kinase-like"/>
    <property type="match status" value="1"/>
</dbReference>
<dbReference type="SUPFAM" id="SSF55347">
    <property type="entry name" value="Glyceraldehyde-3-phosphate dehydrogenase-like, C-terminal domain"/>
    <property type="match status" value="1"/>
</dbReference>
<dbReference type="SUPFAM" id="SSF51735">
    <property type="entry name" value="NAD(P)-binding Rossmann-fold domains"/>
    <property type="match status" value="1"/>
</dbReference>
<dbReference type="PROSITE" id="PS01224">
    <property type="entry name" value="ARGC"/>
    <property type="match status" value="1"/>
</dbReference>
<dbReference type="PROSITE" id="PS51731">
    <property type="entry name" value="GNAT_NAGS"/>
    <property type="match status" value="1"/>
</dbReference>
<feature type="transit peptide" description="Mitochondrion" evidence="3">
    <location>
        <begin position="1"/>
        <end position="44"/>
    </location>
</feature>
<feature type="chain" id="PRO_0000002069" description="Acetylglutamate kinase">
    <location>
        <begin position="45"/>
        <end position="531"/>
    </location>
</feature>
<feature type="chain" id="PRO_0000002070" description="N-acetyl-gamma-glutamyl-phosphate reductase">
    <location>
        <begin position="532"/>
        <end position="871"/>
    </location>
</feature>
<feature type="domain" description="N-acetyltransferase" evidence="1">
    <location>
        <begin position="336"/>
        <end position="488"/>
    </location>
</feature>
<feature type="active site" evidence="2">
    <location>
        <position position="689"/>
    </location>
</feature>
<feature type="sequence conflict" description="In Ref. 1; AAB05636." evidence="4" ref="1">
    <original>A</original>
    <variation>G</variation>
    <location>
        <position position="11"/>
    </location>
</feature>
<proteinExistence type="evidence at protein level"/>
<accession>P54898</accession>
<accession>Q7RVL1</accession>
<accession>V5IRF5</accession>
<name>ARG56_NEUCR</name>
<keyword id="KW-0028">Amino-acid biosynthesis</keyword>
<keyword id="KW-0055">Arginine biosynthesis</keyword>
<keyword id="KW-0067">ATP-binding</keyword>
<keyword id="KW-0903">Direct protein sequencing</keyword>
<keyword id="KW-0418">Kinase</keyword>
<keyword id="KW-0496">Mitochondrion</keyword>
<keyword id="KW-0511">Multifunctional enzyme</keyword>
<keyword id="KW-0521">NADP</keyword>
<keyword id="KW-0547">Nucleotide-binding</keyword>
<keyword id="KW-0560">Oxidoreductase</keyword>
<keyword id="KW-1185">Reference proteome</keyword>
<keyword id="KW-0808">Transferase</keyword>
<keyword id="KW-0809">Transit peptide</keyword>
<gene>
    <name type="primary">arg-6</name>
    <name type="synonym">orn-2</name>
    <name type="ORF">NCU00567</name>
</gene>
<reference key="1">
    <citation type="journal article" date="1994" name="J. Biol. Chem.">
        <title>A polyprotein precursor of two mitochondrial enzymes in Neurospora crassa. Gene structure and precursor processing.</title>
        <authorList>
            <person name="Gessert S.F."/>
            <person name="Kim J.H."/>
            <person name="Nargang F.E."/>
            <person name="Weiss R.L."/>
        </authorList>
    </citation>
    <scope>NUCLEOTIDE SEQUENCE [GENOMIC DNA]</scope>
    <scope>PROTEIN SEQUENCE OF 45-62 AND 532-569</scope>
    <source>
        <strain>NCN53 / FGSC 7595</strain>
    </source>
</reference>
<reference key="2">
    <citation type="journal article" date="2003" name="Nature">
        <title>The genome sequence of the filamentous fungus Neurospora crassa.</title>
        <authorList>
            <person name="Galagan J.E."/>
            <person name="Calvo S.E."/>
            <person name="Borkovich K.A."/>
            <person name="Selker E.U."/>
            <person name="Read N.D."/>
            <person name="Jaffe D.B."/>
            <person name="FitzHugh W."/>
            <person name="Ma L.-J."/>
            <person name="Smirnov S."/>
            <person name="Purcell S."/>
            <person name="Rehman B."/>
            <person name="Elkins T."/>
            <person name="Engels R."/>
            <person name="Wang S."/>
            <person name="Nielsen C.B."/>
            <person name="Butler J."/>
            <person name="Endrizzi M."/>
            <person name="Qui D."/>
            <person name="Ianakiev P."/>
            <person name="Bell-Pedersen D."/>
            <person name="Nelson M.A."/>
            <person name="Werner-Washburne M."/>
            <person name="Selitrennikoff C.P."/>
            <person name="Kinsey J.A."/>
            <person name="Braun E.L."/>
            <person name="Zelter A."/>
            <person name="Schulte U."/>
            <person name="Kothe G.O."/>
            <person name="Jedd G."/>
            <person name="Mewes H.-W."/>
            <person name="Staben C."/>
            <person name="Marcotte E."/>
            <person name="Greenberg D."/>
            <person name="Roy A."/>
            <person name="Foley K."/>
            <person name="Naylor J."/>
            <person name="Stange-Thomann N."/>
            <person name="Barrett R."/>
            <person name="Gnerre S."/>
            <person name="Kamal M."/>
            <person name="Kamvysselis M."/>
            <person name="Mauceli E.W."/>
            <person name="Bielke C."/>
            <person name="Rudd S."/>
            <person name="Frishman D."/>
            <person name="Krystofova S."/>
            <person name="Rasmussen C."/>
            <person name="Metzenberg R.L."/>
            <person name="Perkins D.D."/>
            <person name="Kroken S."/>
            <person name="Cogoni C."/>
            <person name="Macino G."/>
            <person name="Catcheside D.E.A."/>
            <person name="Li W."/>
            <person name="Pratt R.J."/>
            <person name="Osmani S.A."/>
            <person name="DeSouza C.P.C."/>
            <person name="Glass N.L."/>
            <person name="Orbach M.J."/>
            <person name="Berglund J.A."/>
            <person name="Voelker R."/>
            <person name="Yarden O."/>
            <person name="Plamann M."/>
            <person name="Seiler S."/>
            <person name="Dunlap J.C."/>
            <person name="Radford A."/>
            <person name="Aramayo R."/>
            <person name="Natvig D.O."/>
            <person name="Alex L.A."/>
            <person name="Mannhaupt G."/>
            <person name="Ebbole D.J."/>
            <person name="Freitag M."/>
            <person name="Paulsen I."/>
            <person name="Sachs M.S."/>
            <person name="Lander E.S."/>
            <person name="Nusbaum C."/>
            <person name="Birren B.W."/>
        </authorList>
    </citation>
    <scope>NUCLEOTIDE SEQUENCE [LARGE SCALE GENOMIC DNA]</scope>
    <source>
        <strain>ATCC 24698 / 74-OR23-1A / CBS 708.71 / DSM 1257 / FGSC 987</strain>
    </source>
</reference>
<comment type="catalytic activity">
    <reaction>
        <text>N-acetyl-L-glutamate 5-semialdehyde + phosphate + NADP(+) = N-acetyl-L-glutamyl 5-phosphate + NADPH + H(+)</text>
        <dbReference type="Rhea" id="RHEA:21588"/>
        <dbReference type="ChEBI" id="CHEBI:15378"/>
        <dbReference type="ChEBI" id="CHEBI:29123"/>
        <dbReference type="ChEBI" id="CHEBI:43474"/>
        <dbReference type="ChEBI" id="CHEBI:57783"/>
        <dbReference type="ChEBI" id="CHEBI:57936"/>
        <dbReference type="ChEBI" id="CHEBI:58349"/>
        <dbReference type="EC" id="1.2.1.38"/>
    </reaction>
</comment>
<comment type="catalytic activity">
    <reaction>
        <text>N-acetyl-L-glutamate + ATP = N-acetyl-L-glutamyl 5-phosphate + ADP</text>
        <dbReference type="Rhea" id="RHEA:14629"/>
        <dbReference type="ChEBI" id="CHEBI:30616"/>
        <dbReference type="ChEBI" id="CHEBI:44337"/>
        <dbReference type="ChEBI" id="CHEBI:57936"/>
        <dbReference type="ChEBI" id="CHEBI:456216"/>
        <dbReference type="EC" id="2.7.2.8"/>
    </reaction>
</comment>
<comment type="pathway">
    <text>Amino-acid biosynthesis; L-arginine biosynthesis; N(2)-acetyl-L-ornithine from L-glutamate: step 2/4.</text>
</comment>
<comment type="pathway">
    <text>Amino-acid biosynthesis; L-arginine biosynthesis; N(2)-acetyl-L-ornithine from L-glutamate: step 3/4.</text>
</comment>
<comment type="subcellular location">
    <subcellularLocation>
        <location>Mitochondrion</location>
    </subcellularLocation>
</comment>
<comment type="PTM">
    <text>The protein precursor is cleaved into the two biologically active enzymes, the kinase and the reductase.</text>
</comment>
<comment type="similarity">
    <text evidence="4">In the N-terminal section; belongs to the acetylglutamate kinase family.</text>
</comment>
<comment type="similarity">
    <text evidence="4">In the C-terminal section; belongs to the NAGSA dehydrogenase family.</text>
</comment>
<evidence type="ECO:0000255" key="1">
    <source>
        <dbReference type="PROSITE-ProRule" id="PRU00532"/>
    </source>
</evidence>
<evidence type="ECO:0000255" key="2">
    <source>
        <dbReference type="PROSITE-ProRule" id="PRU10010"/>
    </source>
</evidence>
<evidence type="ECO:0000269" key="3">
    <source>
    </source>
</evidence>
<evidence type="ECO:0000305" key="4"/>